<dbReference type="EMBL" id="DP000020">
    <property type="protein sequence ID" value="ABB89797.1"/>
    <property type="molecule type" value="Genomic_DNA"/>
</dbReference>
<dbReference type="RefSeq" id="NP_001107621.1">
    <property type="nucleotide sequence ID" value="NM_001114149.1"/>
</dbReference>
<dbReference type="SMR" id="Q2QLB2"/>
<dbReference type="FunCoup" id="Q2QLB2">
    <property type="interactions" value="706"/>
</dbReference>
<dbReference type="STRING" id="9796.ENSECAP00000035549"/>
<dbReference type="PaxDb" id="9796-ENSECAP00000035549"/>
<dbReference type="PeptideAtlas" id="Q2QLB2"/>
<dbReference type="GeneID" id="100071093"/>
<dbReference type="KEGG" id="ecb:100071093"/>
<dbReference type="CTD" id="26136"/>
<dbReference type="InParanoid" id="Q2QLB2"/>
<dbReference type="OrthoDB" id="10069167at2759"/>
<dbReference type="Proteomes" id="UP000002281">
    <property type="component" value="Unplaced"/>
</dbReference>
<dbReference type="GO" id="GO:0005737">
    <property type="term" value="C:cytoplasm"/>
    <property type="evidence" value="ECO:0000250"/>
    <property type="project" value="UniProtKB"/>
</dbReference>
<dbReference type="GO" id="GO:0005925">
    <property type="term" value="C:focal adhesion"/>
    <property type="evidence" value="ECO:0007669"/>
    <property type="project" value="UniProtKB-SubCell"/>
</dbReference>
<dbReference type="GO" id="GO:0008270">
    <property type="term" value="F:zinc ion binding"/>
    <property type="evidence" value="ECO:0000250"/>
    <property type="project" value="UniProtKB"/>
</dbReference>
<dbReference type="GO" id="GO:0008285">
    <property type="term" value="P:negative regulation of cell population proliferation"/>
    <property type="evidence" value="ECO:0000250"/>
    <property type="project" value="UniProtKB"/>
</dbReference>
<dbReference type="CDD" id="cd09413">
    <property type="entry name" value="LIM1_Testin"/>
    <property type="match status" value="1"/>
</dbReference>
<dbReference type="CDD" id="cd09416">
    <property type="entry name" value="LIM2_Testin"/>
    <property type="match status" value="1"/>
</dbReference>
<dbReference type="CDD" id="cd09419">
    <property type="entry name" value="LIM3_Testin"/>
    <property type="match status" value="1"/>
</dbReference>
<dbReference type="CDD" id="cd09829">
    <property type="entry name" value="PET_testin"/>
    <property type="match status" value="1"/>
</dbReference>
<dbReference type="FunFam" id="2.10.110.10:FF:000061">
    <property type="entry name" value="Testin"/>
    <property type="match status" value="1"/>
</dbReference>
<dbReference type="FunFam" id="2.10.110.10:FF:000065">
    <property type="entry name" value="Testin"/>
    <property type="match status" value="1"/>
</dbReference>
<dbReference type="FunFam" id="2.10.110.10:FF:000005">
    <property type="entry name" value="Testin isoform 1"/>
    <property type="match status" value="1"/>
</dbReference>
<dbReference type="Gene3D" id="2.10.110.10">
    <property type="entry name" value="Cysteine Rich Protein"/>
    <property type="match status" value="3"/>
</dbReference>
<dbReference type="InterPro" id="IPR034958">
    <property type="entry name" value="LIM1_Testin"/>
</dbReference>
<dbReference type="InterPro" id="IPR034959">
    <property type="entry name" value="LIM2_Testin"/>
</dbReference>
<dbReference type="InterPro" id="IPR034960">
    <property type="entry name" value="LIM3_Testin"/>
</dbReference>
<dbReference type="InterPro" id="IPR010442">
    <property type="entry name" value="PET_domain"/>
</dbReference>
<dbReference type="InterPro" id="IPR033724">
    <property type="entry name" value="PET_testin"/>
</dbReference>
<dbReference type="InterPro" id="IPR047120">
    <property type="entry name" value="Pk/Esn/Tes"/>
</dbReference>
<dbReference type="InterPro" id="IPR001781">
    <property type="entry name" value="Znf_LIM"/>
</dbReference>
<dbReference type="PANTHER" id="PTHR24211">
    <property type="entry name" value="LIM DOMAIN-CONTAINING PROTEIN"/>
    <property type="match status" value="1"/>
</dbReference>
<dbReference type="PANTHER" id="PTHR24211:SF1">
    <property type="entry name" value="TESTIN"/>
    <property type="match status" value="1"/>
</dbReference>
<dbReference type="Pfam" id="PF00412">
    <property type="entry name" value="LIM"/>
    <property type="match status" value="3"/>
</dbReference>
<dbReference type="Pfam" id="PF06297">
    <property type="entry name" value="PET"/>
    <property type="match status" value="1"/>
</dbReference>
<dbReference type="SMART" id="SM00132">
    <property type="entry name" value="LIM"/>
    <property type="match status" value="3"/>
</dbReference>
<dbReference type="SUPFAM" id="SSF57716">
    <property type="entry name" value="Glucocorticoid receptor-like (DNA-binding domain)"/>
    <property type="match status" value="2"/>
</dbReference>
<dbReference type="PROSITE" id="PS00478">
    <property type="entry name" value="LIM_DOMAIN_1"/>
    <property type="match status" value="2"/>
</dbReference>
<dbReference type="PROSITE" id="PS50023">
    <property type="entry name" value="LIM_DOMAIN_2"/>
    <property type="match status" value="3"/>
</dbReference>
<dbReference type="PROSITE" id="PS51303">
    <property type="entry name" value="PET"/>
    <property type="match status" value="1"/>
</dbReference>
<accession>Q2QLB2</accession>
<comment type="function">
    <text evidence="1">Scaffold protein that may play a role in cell adhesion, cell spreading and in the reorganization of the actin cytoskeleton. Plays a role in the regulation of cell proliferation. May act as a tumor suppressor (By similarity).</text>
</comment>
<comment type="subunit">
    <text evidence="1">Interacts via LIM domain 1 with ZYX. Interacts (via LIM domain 3) with ENAH and VASP. Interacts with ALKBH4, talin, actin, alpha-actinin, GRIP1 and PXN (By similarity). Interacts (via LIM domain 2) with ACTL7A (via N-terminus). Heterodimer with ACTL7A; the heterodimer interacts with ENAH to form a heterotrimer (By similarity).</text>
</comment>
<comment type="subcellular location">
    <subcellularLocation>
        <location evidence="1">Cytoplasm</location>
    </subcellularLocation>
    <subcellularLocation>
        <location evidence="1">Cell junction</location>
        <location evidence="1">Focal adhesion</location>
    </subcellularLocation>
    <text evidence="1">Detected along actin stress fibers.</text>
</comment>
<comment type="domain">
    <text evidence="1">The N-terminal and the C-terminal halves of the protein can associate with each other, thereby hindering interactions with ZYX.</text>
</comment>
<comment type="similarity">
    <text evidence="5">Belongs to the prickle / espinas / testin family.</text>
</comment>
<sequence>MDLETKVKKMGLGHGQGFGAPCLKCKEKCEGFELHFWRKICRNCKCGQEEHDVLLSNEEDRKVGKLFEDTKYTTLIAKLKSDGIPMYKRNVMILTNPVAAKKNISINTVTYEWAPPVQNQALARQYMQMLPKEKQPVAGSEGAQYRKKQLAKQLPAHDQDPSKCHELSPKEVKEMEQFVKKYKNEALGVGDVKLPREMDAQDPNRMCIPGGDRSTTAAVGAKENKLAENKRTQYSCYCCNLSMKEGDPAIYAERAGYDKLWHPACFVCSTCHELLVDMIYFWKNGKLYCGRHYCDSEKPRCAGCDELIFSNEYTQAENQNWHLKHFCCFDCDSILAGEIYVMVNDKPVCKPCYVKNHAVVCQGCHNAIDPEVQRVTYNNFSWHASTECFLCSCCSKCLIGQKFMPVEGMVFCSVECKKMMS</sequence>
<name>TES_HORSE</name>
<evidence type="ECO:0000250" key="1"/>
<evidence type="ECO:0000255" key="2">
    <source>
        <dbReference type="PROSITE-ProRule" id="PRU00125"/>
    </source>
</evidence>
<evidence type="ECO:0000255" key="3">
    <source>
        <dbReference type="PROSITE-ProRule" id="PRU00636"/>
    </source>
</evidence>
<evidence type="ECO:0000256" key="4">
    <source>
        <dbReference type="SAM" id="MobiDB-lite"/>
    </source>
</evidence>
<evidence type="ECO:0000305" key="5"/>
<reference key="1">
    <citation type="submission" date="2005-11" db="EMBL/GenBank/DDBJ databases">
        <title>NISC comparative sequencing initiative.</title>
        <authorList>
            <person name="Antonellis A."/>
            <person name="Ayele K."/>
            <person name="Benjamin B."/>
            <person name="Blakesley R.W."/>
            <person name="Boakye A."/>
            <person name="Bouffard G.G."/>
            <person name="Brinkley C."/>
            <person name="Brooks S."/>
            <person name="Chu G."/>
            <person name="Coleman H."/>
            <person name="Engle J."/>
            <person name="Gestole M."/>
            <person name="Greene A."/>
            <person name="Guan X."/>
            <person name="Gupta J."/>
            <person name="Haghighi P."/>
            <person name="Han J."/>
            <person name="Hansen N."/>
            <person name="Ho S.-L."/>
            <person name="Hu P."/>
            <person name="Hunter G."/>
            <person name="Hurle B."/>
            <person name="Idol J.R."/>
            <person name="Kwong P."/>
            <person name="Laric P."/>
            <person name="Larson S."/>
            <person name="Lee-Lin S.-Q."/>
            <person name="Legaspi R."/>
            <person name="Madden M."/>
            <person name="Maduro Q.L."/>
            <person name="Maduro V.B."/>
            <person name="Margulies E.H."/>
            <person name="Masiello C."/>
            <person name="Maskeri B."/>
            <person name="McDowell J."/>
            <person name="Mojidi H.A."/>
            <person name="Mullikin J.C."/>
            <person name="Oestreicher J.S."/>
            <person name="Park M."/>
            <person name="Portnoy M.E."/>
            <person name="Prasad A."/>
            <person name="Puri O."/>
            <person name="Reddix-Dugue N."/>
            <person name="Schandler K."/>
            <person name="Schueler M.G."/>
            <person name="Sison C."/>
            <person name="Stantripop S."/>
            <person name="Stephen E."/>
            <person name="Taye A."/>
            <person name="Thomas J.W."/>
            <person name="Thomas P.J."/>
            <person name="Tsipouri V."/>
            <person name="Ung L."/>
            <person name="Vogt J.L."/>
            <person name="Wetherby K.D."/>
            <person name="Young A."/>
            <person name="Green E.D."/>
        </authorList>
    </citation>
    <scope>NUCLEOTIDE SEQUENCE [LARGE SCALE GENOMIC DNA]</scope>
</reference>
<gene>
    <name type="primary">TES</name>
</gene>
<feature type="chain" id="PRO_0000226346" description="Testin">
    <location>
        <begin position="1"/>
        <end position="421"/>
    </location>
</feature>
<feature type="domain" description="PET" evidence="3">
    <location>
        <begin position="92"/>
        <end position="199"/>
    </location>
</feature>
<feature type="domain" description="LIM zinc-binding 1" evidence="2">
    <location>
        <begin position="234"/>
        <end position="297"/>
    </location>
</feature>
<feature type="domain" description="LIM zinc-binding 2" evidence="2">
    <location>
        <begin position="299"/>
        <end position="359"/>
    </location>
</feature>
<feature type="domain" description="LIM zinc-binding 3" evidence="2">
    <location>
        <begin position="362"/>
        <end position="421"/>
    </location>
</feature>
<feature type="region of interest" description="Disordered" evidence="4">
    <location>
        <begin position="133"/>
        <end position="164"/>
    </location>
</feature>
<feature type="compositionally biased region" description="Basic and acidic residues" evidence="4">
    <location>
        <begin position="155"/>
        <end position="164"/>
    </location>
</feature>
<protein>
    <recommendedName>
        <fullName>Testin</fullName>
    </recommendedName>
</protein>
<keyword id="KW-0965">Cell junction</keyword>
<keyword id="KW-0963">Cytoplasm</keyword>
<keyword id="KW-0440">LIM domain</keyword>
<keyword id="KW-0479">Metal-binding</keyword>
<keyword id="KW-1185">Reference proteome</keyword>
<keyword id="KW-0677">Repeat</keyword>
<keyword id="KW-0862">Zinc</keyword>
<proteinExistence type="inferred from homology"/>
<organism>
    <name type="scientific">Equus caballus</name>
    <name type="common">Horse</name>
    <dbReference type="NCBI Taxonomy" id="9796"/>
    <lineage>
        <taxon>Eukaryota</taxon>
        <taxon>Metazoa</taxon>
        <taxon>Chordata</taxon>
        <taxon>Craniata</taxon>
        <taxon>Vertebrata</taxon>
        <taxon>Euteleostomi</taxon>
        <taxon>Mammalia</taxon>
        <taxon>Eutheria</taxon>
        <taxon>Laurasiatheria</taxon>
        <taxon>Perissodactyla</taxon>
        <taxon>Equidae</taxon>
        <taxon>Equus</taxon>
    </lineage>
</organism>